<feature type="chain" id="PRO_1000184574" description="2,3-bisphosphoglycerate-independent phosphoglycerate mutase">
    <location>
        <begin position="1"/>
        <end position="411"/>
    </location>
</feature>
<reference key="1">
    <citation type="journal article" date="2015" name="Genome Announc.">
        <title>Complete Genome Sequence of Methanosphaerula palustris E1-9CT, a Hydrogenotrophic Methanogen Isolated from a Minerotrophic Fen Peatland.</title>
        <authorList>
            <person name="Cadillo-Quiroz H."/>
            <person name="Browne P."/>
            <person name="Kyrpides N."/>
            <person name="Woyke T."/>
            <person name="Goodwin L."/>
            <person name="Detter C."/>
            <person name="Yavitt J.B."/>
            <person name="Zinder S.H."/>
        </authorList>
    </citation>
    <scope>NUCLEOTIDE SEQUENCE [LARGE SCALE GENOMIC DNA]</scope>
    <source>
        <strain>ATCC BAA-1556 / DSM 19958 / E1-9c</strain>
    </source>
</reference>
<gene>
    <name evidence="1" type="primary">apgM</name>
    <name type="ordered locus">Mpal_2656</name>
</gene>
<evidence type="ECO:0000255" key="1">
    <source>
        <dbReference type="HAMAP-Rule" id="MF_01402"/>
    </source>
</evidence>
<organism>
    <name type="scientific">Methanosphaerula palustris (strain ATCC BAA-1556 / DSM 19958 / E1-9c)</name>
    <dbReference type="NCBI Taxonomy" id="521011"/>
    <lineage>
        <taxon>Archaea</taxon>
        <taxon>Methanobacteriati</taxon>
        <taxon>Methanobacteriota</taxon>
        <taxon>Stenosarchaea group</taxon>
        <taxon>Methanomicrobia</taxon>
        <taxon>Methanomicrobiales</taxon>
        <taxon>Methanoregulaceae</taxon>
        <taxon>Methanosphaerula</taxon>
    </lineage>
</organism>
<keyword id="KW-0324">Glycolysis</keyword>
<keyword id="KW-0413">Isomerase</keyword>
<keyword id="KW-1185">Reference proteome</keyword>
<accession>B8GFN7</accession>
<comment type="function">
    <text evidence="1">Catalyzes the interconversion of 2-phosphoglycerate and 3-phosphoglycerate.</text>
</comment>
<comment type="catalytic activity">
    <reaction evidence="1">
        <text>(2R)-2-phosphoglycerate = (2R)-3-phosphoglycerate</text>
        <dbReference type="Rhea" id="RHEA:15901"/>
        <dbReference type="ChEBI" id="CHEBI:58272"/>
        <dbReference type="ChEBI" id="CHEBI:58289"/>
        <dbReference type="EC" id="5.4.2.12"/>
    </reaction>
</comment>
<comment type="pathway">
    <text evidence="1">Carbohydrate degradation; glycolysis; pyruvate from D-glyceraldehyde 3-phosphate: step 3/5.</text>
</comment>
<comment type="similarity">
    <text evidence="1">Belongs to the BPG-independent phosphoglycerate mutase family. A-PGAM subfamily.</text>
</comment>
<protein>
    <recommendedName>
        <fullName evidence="1">2,3-bisphosphoglycerate-independent phosphoglycerate mutase</fullName>
        <shortName evidence="1">BPG-independent PGAM</shortName>
        <shortName evidence="1">Phosphoglyceromutase</shortName>
        <shortName evidence="1">aPGAM</shortName>
        <ecNumber evidence="1">5.4.2.12</ecNumber>
    </recommendedName>
</protein>
<sequence>MTAHKIVMLVLDGIGDRPCGELAGMTPLQAAKTPILDQLAAEGITGIMDTIGPGIRPGSDTSHLSLLGYPPESYYTGRGPLEAEGCGIHMEHGMIGFRANFATQNDHGLVTDRRAGRIHDTRLLSAAITDQVDLSAFGVTFSFASGAGHRAALALSGEGLGAGVTSNDPKEDGVAPHQVMPVSANPEDQKTAAVCNEFIRQSTAILADHPMNRARVLNGESPASVVLIRGAGEMGGFEPFQQRYDLSGAVIAAATLVTGIGKAVGLEYIPVEGVTGSTTTNLTGKVQTLMATLDTHDFVLLNIKGADEAGHDGHAIEKRDFIERIDAALALLLERNDCIIAVMGDHSTPCPIKEHSADPVPVLIRGDGVRVDLVQAYDEIACAAGGLNRIRGADILWILLDLIDKTHKYGT</sequence>
<proteinExistence type="inferred from homology"/>
<name>APGM_METPE</name>
<dbReference type="EC" id="5.4.2.12" evidence="1"/>
<dbReference type="EMBL" id="CP001338">
    <property type="protein sequence ID" value="ACL17920.1"/>
    <property type="molecule type" value="Genomic_DNA"/>
</dbReference>
<dbReference type="RefSeq" id="WP_012619239.1">
    <property type="nucleotide sequence ID" value="NC_011832.1"/>
</dbReference>
<dbReference type="SMR" id="B8GFN7"/>
<dbReference type="STRING" id="521011.Mpal_2656"/>
<dbReference type="GeneID" id="7272478"/>
<dbReference type="KEGG" id="mpl:Mpal_2656"/>
<dbReference type="eggNOG" id="arCOG01696">
    <property type="taxonomic scope" value="Archaea"/>
</dbReference>
<dbReference type="HOGENOM" id="CLU_034906_2_0_2"/>
<dbReference type="OrthoDB" id="52918at2157"/>
<dbReference type="UniPathway" id="UPA00109">
    <property type="reaction ID" value="UER00186"/>
</dbReference>
<dbReference type="Proteomes" id="UP000002457">
    <property type="component" value="Chromosome"/>
</dbReference>
<dbReference type="GO" id="GO:0046872">
    <property type="term" value="F:metal ion binding"/>
    <property type="evidence" value="ECO:0007669"/>
    <property type="project" value="InterPro"/>
</dbReference>
<dbReference type="GO" id="GO:0004619">
    <property type="term" value="F:phosphoglycerate mutase activity"/>
    <property type="evidence" value="ECO:0007669"/>
    <property type="project" value="UniProtKB-EC"/>
</dbReference>
<dbReference type="GO" id="GO:0006096">
    <property type="term" value="P:glycolytic process"/>
    <property type="evidence" value="ECO:0007669"/>
    <property type="project" value="UniProtKB-UniRule"/>
</dbReference>
<dbReference type="CDD" id="cd16011">
    <property type="entry name" value="iPGM_like"/>
    <property type="match status" value="1"/>
</dbReference>
<dbReference type="Gene3D" id="3.40.720.10">
    <property type="entry name" value="Alkaline Phosphatase, subunit A"/>
    <property type="match status" value="2"/>
</dbReference>
<dbReference type="HAMAP" id="MF_01402_A">
    <property type="entry name" value="ApgM_A"/>
    <property type="match status" value="1"/>
</dbReference>
<dbReference type="InterPro" id="IPR017850">
    <property type="entry name" value="Alkaline_phosphatase_core_sf"/>
</dbReference>
<dbReference type="InterPro" id="IPR023665">
    <property type="entry name" value="ApgAM_prokaryotes"/>
</dbReference>
<dbReference type="InterPro" id="IPR006124">
    <property type="entry name" value="Metalloenzyme"/>
</dbReference>
<dbReference type="InterPro" id="IPR004456">
    <property type="entry name" value="Pglycerate_mutase_ApgM"/>
</dbReference>
<dbReference type="NCBIfam" id="TIGR00306">
    <property type="entry name" value="apgM"/>
    <property type="match status" value="1"/>
</dbReference>
<dbReference type="NCBIfam" id="NF003104">
    <property type="entry name" value="PRK04024.1"/>
    <property type="match status" value="1"/>
</dbReference>
<dbReference type="PANTHER" id="PTHR31209">
    <property type="entry name" value="COFACTOR-INDEPENDENT PHOSPHOGLYCERATE MUTASE"/>
    <property type="match status" value="1"/>
</dbReference>
<dbReference type="PANTHER" id="PTHR31209:SF0">
    <property type="entry name" value="METALLOENZYME DOMAIN-CONTAINING PROTEIN"/>
    <property type="match status" value="1"/>
</dbReference>
<dbReference type="Pfam" id="PF01676">
    <property type="entry name" value="Metalloenzyme"/>
    <property type="match status" value="1"/>
</dbReference>
<dbReference type="Pfam" id="PF10143">
    <property type="entry name" value="PhosphMutase"/>
    <property type="match status" value="1"/>
</dbReference>
<dbReference type="PIRSF" id="PIRSF006392">
    <property type="entry name" value="IPGAM_arch"/>
    <property type="match status" value="1"/>
</dbReference>
<dbReference type="SUPFAM" id="SSF53649">
    <property type="entry name" value="Alkaline phosphatase-like"/>
    <property type="match status" value="1"/>
</dbReference>